<proteinExistence type="inferred from homology"/>
<comment type="function">
    <text evidence="1">Catalyzes the ATP-dependent condensation of GlcN-Ins and L-cysteine to form L-Cys-GlcN-Ins.</text>
</comment>
<comment type="catalytic activity">
    <reaction evidence="1">
        <text>1D-myo-inositol 2-amino-2-deoxy-alpha-D-glucopyranoside + L-cysteine + ATP = 1D-myo-inositol 2-(L-cysteinylamino)-2-deoxy-alpha-D-glucopyranoside + AMP + diphosphate + H(+)</text>
        <dbReference type="Rhea" id="RHEA:26176"/>
        <dbReference type="ChEBI" id="CHEBI:15378"/>
        <dbReference type="ChEBI" id="CHEBI:30616"/>
        <dbReference type="ChEBI" id="CHEBI:33019"/>
        <dbReference type="ChEBI" id="CHEBI:35235"/>
        <dbReference type="ChEBI" id="CHEBI:58886"/>
        <dbReference type="ChEBI" id="CHEBI:58887"/>
        <dbReference type="ChEBI" id="CHEBI:456215"/>
        <dbReference type="EC" id="6.3.1.13"/>
    </reaction>
</comment>
<comment type="cofactor">
    <cofactor evidence="1">
        <name>Zn(2+)</name>
        <dbReference type="ChEBI" id="CHEBI:29105"/>
    </cofactor>
    <text evidence="1">Binds 1 zinc ion per subunit.</text>
</comment>
<comment type="subunit">
    <text evidence="1">Monomer.</text>
</comment>
<comment type="similarity">
    <text evidence="1">Belongs to the class-I aminoacyl-tRNA synthetase family. MshC subfamily.</text>
</comment>
<gene>
    <name evidence="1" type="primary">mshC</name>
    <name type="ordered locus">CMM_1694</name>
</gene>
<dbReference type="EC" id="6.3.1.13" evidence="1"/>
<dbReference type="EMBL" id="AM711867">
    <property type="protein sequence ID" value="CAN01747.1"/>
    <property type="molecule type" value="Genomic_DNA"/>
</dbReference>
<dbReference type="RefSeq" id="WP_012038382.1">
    <property type="nucleotide sequence ID" value="NC_009480.1"/>
</dbReference>
<dbReference type="SMR" id="A5CRN7"/>
<dbReference type="KEGG" id="cmi:CMM_1694"/>
<dbReference type="eggNOG" id="COG0215">
    <property type="taxonomic scope" value="Bacteria"/>
</dbReference>
<dbReference type="HOGENOM" id="CLU_013528_0_0_11"/>
<dbReference type="OrthoDB" id="9815130at2"/>
<dbReference type="Proteomes" id="UP000001564">
    <property type="component" value="Chromosome"/>
</dbReference>
<dbReference type="GO" id="GO:0005829">
    <property type="term" value="C:cytosol"/>
    <property type="evidence" value="ECO:0007669"/>
    <property type="project" value="TreeGrafter"/>
</dbReference>
<dbReference type="GO" id="GO:0005524">
    <property type="term" value="F:ATP binding"/>
    <property type="evidence" value="ECO:0007669"/>
    <property type="project" value="UniProtKB-KW"/>
</dbReference>
<dbReference type="GO" id="GO:0035446">
    <property type="term" value="F:cysteine-glucosaminylinositol ligase activity"/>
    <property type="evidence" value="ECO:0007669"/>
    <property type="project" value="UniProtKB-UniRule"/>
</dbReference>
<dbReference type="GO" id="GO:0004817">
    <property type="term" value="F:cysteine-tRNA ligase activity"/>
    <property type="evidence" value="ECO:0007669"/>
    <property type="project" value="TreeGrafter"/>
</dbReference>
<dbReference type="GO" id="GO:0008270">
    <property type="term" value="F:zinc ion binding"/>
    <property type="evidence" value="ECO:0007669"/>
    <property type="project" value="UniProtKB-UniRule"/>
</dbReference>
<dbReference type="GO" id="GO:0006423">
    <property type="term" value="P:cysteinyl-tRNA aminoacylation"/>
    <property type="evidence" value="ECO:0007669"/>
    <property type="project" value="TreeGrafter"/>
</dbReference>
<dbReference type="GO" id="GO:0010125">
    <property type="term" value="P:mycothiol biosynthetic process"/>
    <property type="evidence" value="ECO:0007669"/>
    <property type="project" value="UniProtKB-UniRule"/>
</dbReference>
<dbReference type="Gene3D" id="1.20.120.640">
    <property type="entry name" value="Anticodon-binding domain of a subclass of class I aminoacyl-tRNA synthetases"/>
    <property type="match status" value="1"/>
</dbReference>
<dbReference type="Gene3D" id="3.40.50.620">
    <property type="entry name" value="HUPs"/>
    <property type="match status" value="1"/>
</dbReference>
<dbReference type="HAMAP" id="MF_01697">
    <property type="entry name" value="MshC"/>
    <property type="match status" value="1"/>
</dbReference>
<dbReference type="InterPro" id="IPR024909">
    <property type="entry name" value="Cys-tRNA/MSH_ligase"/>
</dbReference>
<dbReference type="InterPro" id="IPR017812">
    <property type="entry name" value="Mycothiol_ligase_MshC"/>
</dbReference>
<dbReference type="InterPro" id="IPR014729">
    <property type="entry name" value="Rossmann-like_a/b/a_fold"/>
</dbReference>
<dbReference type="InterPro" id="IPR032678">
    <property type="entry name" value="tRNA-synt_1_cat_dom"/>
</dbReference>
<dbReference type="NCBIfam" id="TIGR03447">
    <property type="entry name" value="mycothiol_MshC"/>
    <property type="match status" value="1"/>
</dbReference>
<dbReference type="PANTHER" id="PTHR10890:SF3">
    <property type="entry name" value="CYSTEINE--TRNA LIGASE, CYTOPLASMIC"/>
    <property type="match status" value="1"/>
</dbReference>
<dbReference type="PANTHER" id="PTHR10890">
    <property type="entry name" value="CYSTEINYL-TRNA SYNTHETASE"/>
    <property type="match status" value="1"/>
</dbReference>
<dbReference type="Pfam" id="PF01406">
    <property type="entry name" value="tRNA-synt_1e"/>
    <property type="match status" value="1"/>
</dbReference>
<dbReference type="PRINTS" id="PR00983">
    <property type="entry name" value="TRNASYNTHCYS"/>
</dbReference>
<dbReference type="SUPFAM" id="SSF52374">
    <property type="entry name" value="Nucleotidylyl transferase"/>
    <property type="match status" value="1"/>
</dbReference>
<name>MSHC_CLAM3</name>
<accession>A5CRN7</accession>
<protein>
    <recommendedName>
        <fullName evidence="1">L-cysteine:1D-myo-inositol 2-amino-2-deoxy-alpha-D-glucopyranoside ligase</fullName>
        <shortName evidence="1">L-Cys:GlcN-Ins ligase</shortName>
        <ecNumber evidence="1">6.3.1.13</ecNumber>
    </recommendedName>
    <alternativeName>
        <fullName evidence="1">Mycothiol ligase</fullName>
        <shortName evidence="1">MSH ligase</shortName>
    </alternativeName>
</protein>
<feature type="chain" id="PRO_0000400435" description="L-cysteine:1D-myo-inositol 2-amino-2-deoxy-alpha-D-glucopyranoside ligase">
    <location>
        <begin position="1"/>
        <end position="426"/>
    </location>
</feature>
<feature type="short sequence motif" description="'HIGH' region" evidence="1">
    <location>
        <begin position="47"/>
        <end position="57"/>
    </location>
</feature>
<feature type="short sequence motif" description="'ERGGDP' region" evidence="1">
    <location>
        <begin position="199"/>
        <end position="204"/>
    </location>
</feature>
<feature type="short sequence motif" description="'KMSKS' region" evidence="1">
    <location>
        <begin position="300"/>
        <end position="304"/>
    </location>
</feature>
<feature type="binding site" evidence="1">
    <location>
        <begin position="45"/>
        <end position="48"/>
    </location>
    <ligand>
        <name>L-cysteinyl-5'-AMP</name>
        <dbReference type="ChEBI" id="CHEBI:144924"/>
    </ligand>
</feature>
<feature type="binding site" evidence="1">
    <location>
        <position position="45"/>
    </location>
    <ligand>
        <name>Zn(2+)</name>
        <dbReference type="ChEBI" id="CHEBI:29105"/>
    </ligand>
</feature>
<feature type="binding site" evidence="1">
    <location>
        <position position="60"/>
    </location>
    <ligand>
        <name>L-cysteinyl-5'-AMP</name>
        <dbReference type="ChEBI" id="CHEBI:144924"/>
    </ligand>
</feature>
<feature type="binding site" evidence="1">
    <location>
        <begin position="83"/>
        <end position="85"/>
    </location>
    <ligand>
        <name>L-cysteinyl-5'-AMP</name>
        <dbReference type="ChEBI" id="CHEBI:144924"/>
    </ligand>
</feature>
<feature type="binding site" evidence="1">
    <location>
        <position position="239"/>
    </location>
    <ligand>
        <name>L-cysteinyl-5'-AMP</name>
        <dbReference type="ChEBI" id="CHEBI:144924"/>
    </ligand>
</feature>
<feature type="binding site" evidence="1">
    <location>
        <position position="243"/>
    </location>
    <ligand>
        <name>Zn(2+)</name>
        <dbReference type="ChEBI" id="CHEBI:29105"/>
    </ligand>
</feature>
<feature type="binding site" evidence="1">
    <location>
        <begin position="261"/>
        <end position="263"/>
    </location>
    <ligand>
        <name>L-cysteinyl-5'-AMP</name>
        <dbReference type="ChEBI" id="CHEBI:144924"/>
    </ligand>
</feature>
<feature type="binding site" evidence="1">
    <location>
        <position position="268"/>
    </location>
    <ligand>
        <name>Zn(2+)</name>
        <dbReference type="ChEBI" id="CHEBI:29105"/>
    </ligand>
</feature>
<feature type="binding site" evidence="1">
    <location>
        <position position="294"/>
    </location>
    <ligand>
        <name>L-cysteinyl-5'-AMP</name>
        <dbReference type="ChEBI" id="CHEBI:144924"/>
    </ligand>
</feature>
<evidence type="ECO:0000255" key="1">
    <source>
        <dbReference type="HAMAP-Rule" id="MF_01697"/>
    </source>
</evidence>
<keyword id="KW-0067">ATP-binding</keyword>
<keyword id="KW-0436">Ligase</keyword>
<keyword id="KW-0479">Metal-binding</keyword>
<keyword id="KW-0547">Nucleotide-binding</keyword>
<keyword id="KW-0862">Zinc</keyword>
<organism>
    <name type="scientific">Clavibacter michiganensis subsp. michiganensis (strain NCPPB 382)</name>
    <dbReference type="NCBI Taxonomy" id="443906"/>
    <lineage>
        <taxon>Bacteria</taxon>
        <taxon>Bacillati</taxon>
        <taxon>Actinomycetota</taxon>
        <taxon>Actinomycetes</taxon>
        <taxon>Micrococcales</taxon>
        <taxon>Microbacteriaceae</taxon>
        <taxon>Clavibacter</taxon>
    </lineage>
</organism>
<sequence length="426" mass="45369">MRAWPRPVVPAVAGEPPVPTLFDTSAGSVRPAECTGDGRVGLYVCGITPYDATHIGHASTYLAFDTLQRVWLDRGYDVAYVQNVTDVDDPLLERATATGVDWRDLAAEQVELFRTDMEALRILPPDSYVGVTEVVDEVAAAVAELVRRGTAYPVATPDAAQPGARDLYFDVARAGADGPWALGDESGYDRDTMAALSAERGGDPERPGKRDPLDPLLWRAERADEPAWDSAVGRGRPGWHIECAVIALRKLDRPVTVQGGGSDLIFPHHEMSAGHAAALTGEDFACVYAHSGMVAYQGEKMSKSLGNLVLVSRLRAAGVDPRAIRLALLAQHYRADWEWTDALLAESVARLAAWDAWAADAASTDADAGEPGELVQLVRERLADDLDTPGAILLLDLRVATGVPATPVEVAAVDALLGVALGSPAA</sequence>
<reference key="1">
    <citation type="journal article" date="2008" name="J. Bacteriol.">
        <title>The genome sequence of the tomato-pathogenic actinomycete Clavibacter michiganensis subsp. michiganensis NCPPB382 reveals a large island involved in pathogenicity.</title>
        <authorList>
            <person name="Gartemann K.-H."/>
            <person name="Abt B."/>
            <person name="Bekel T."/>
            <person name="Burger A."/>
            <person name="Engemann J."/>
            <person name="Fluegel M."/>
            <person name="Gaigalat L."/>
            <person name="Goesmann A."/>
            <person name="Graefen I."/>
            <person name="Kalinowski J."/>
            <person name="Kaup O."/>
            <person name="Kirchner O."/>
            <person name="Krause L."/>
            <person name="Linke B."/>
            <person name="McHardy A."/>
            <person name="Meyer F."/>
            <person name="Pohle S."/>
            <person name="Rueckert C."/>
            <person name="Schneiker S."/>
            <person name="Zellermann E.-M."/>
            <person name="Puehler A."/>
            <person name="Eichenlaub R."/>
            <person name="Kaiser O."/>
            <person name="Bartels D."/>
        </authorList>
    </citation>
    <scope>NUCLEOTIDE SEQUENCE [LARGE SCALE GENOMIC DNA]</scope>
    <source>
        <strain>NCPPB 382</strain>
    </source>
</reference>